<name>MED7_ASPNC</name>
<feature type="chain" id="PRO_0000303193" description="Mediator of RNA polymerase II transcription subunit 7">
    <location>
        <begin position="1"/>
        <end position="263"/>
    </location>
</feature>
<feature type="region of interest" description="Disordered" evidence="2">
    <location>
        <begin position="1"/>
        <end position="57"/>
    </location>
</feature>
<feature type="region of interest" description="Disordered" evidence="2">
    <location>
        <begin position="101"/>
        <end position="122"/>
    </location>
</feature>
<feature type="region of interest" description="Disordered" evidence="2">
    <location>
        <begin position="222"/>
        <end position="247"/>
    </location>
</feature>
<feature type="compositionally biased region" description="Polar residues" evidence="2">
    <location>
        <begin position="1"/>
        <end position="10"/>
    </location>
</feature>
<feature type="compositionally biased region" description="Basic and acidic residues" evidence="2">
    <location>
        <begin position="24"/>
        <end position="47"/>
    </location>
</feature>
<feature type="compositionally biased region" description="Polar residues" evidence="2">
    <location>
        <begin position="101"/>
        <end position="111"/>
    </location>
</feature>
<feature type="compositionally biased region" description="Basic and acidic residues" evidence="2">
    <location>
        <begin position="234"/>
        <end position="247"/>
    </location>
</feature>
<organism>
    <name type="scientific">Aspergillus niger (strain ATCC MYA-4892 / CBS 513.88 / FGSC A1513)</name>
    <dbReference type="NCBI Taxonomy" id="425011"/>
    <lineage>
        <taxon>Eukaryota</taxon>
        <taxon>Fungi</taxon>
        <taxon>Dikarya</taxon>
        <taxon>Ascomycota</taxon>
        <taxon>Pezizomycotina</taxon>
        <taxon>Eurotiomycetes</taxon>
        <taxon>Eurotiomycetidae</taxon>
        <taxon>Eurotiales</taxon>
        <taxon>Aspergillaceae</taxon>
        <taxon>Aspergillus</taxon>
        <taxon>Aspergillus subgen. Circumdati</taxon>
    </lineage>
</organism>
<keyword id="KW-0010">Activator</keyword>
<keyword id="KW-0539">Nucleus</keyword>
<keyword id="KW-1185">Reference proteome</keyword>
<keyword id="KW-0804">Transcription</keyword>
<keyword id="KW-0805">Transcription regulation</keyword>
<comment type="function">
    <text evidence="1">Component of the Mediator complex, a coactivator involved in the regulated transcription of nearly all RNA polymerase II-dependent genes. Mediator functions as a bridge to convey information from gene-specific regulatory proteins to the basal RNA polymerase II transcription machinery. Mediator is recruited to promoters by direct interactions with regulatory proteins and serves as a scaffold for the assembly of a functional preinitiation complex with RNA polymerase II and the general transcription factors (By similarity).</text>
</comment>
<comment type="subunit">
    <text evidence="1">Component of the Mediator complex.</text>
</comment>
<comment type="subcellular location">
    <subcellularLocation>
        <location evidence="1">Nucleus</location>
    </subcellularLocation>
</comment>
<comment type="similarity">
    <text evidence="3">Belongs to the Mediator complex subunit 7 family.</text>
</comment>
<gene>
    <name type="primary">med7</name>
    <name type="ORF">An11g05320</name>
</gene>
<evidence type="ECO:0000250" key="1"/>
<evidence type="ECO:0000256" key="2">
    <source>
        <dbReference type="SAM" id="MobiDB-lite"/>
    </source>
</evidence>
<evidence type="ECO:0000305" key="3"/>
<proteinExistence type="inferred from homology"/>
<accession>A2QWI7</accession>
<protein>
    <recommendedName>
        <fullName>Mediator of RNA polymerase II transcription subunit 7</fullName>
    </recommendedName>
    <alternativeName>
        <fullName>Mediator complex subunit 7</fullName>
    </alternativeName>
</protein>
<dbReference type="EMBL" id="AM270238">
    <property type="protein sequence ID" value="CAL00381.1"/>
    <property type="molecule type" value="Genomic_DNA"/>
</dbReference>
<dbReference type="RefSeq" id="XP_001394520.1">
    <property type="nucleotide sequence ID" value="XM_001394483.1"/>
</dbReference>
<dbReference type="SMR" id="A2QWI7"/>
<dbReference type="EnsemblFungi" id="CAL00381">
    <property type="protein sequence ID" value="CAL00381"/>
    <property type="gene ID" value="An11g05320"/>
</dbReference>
<dbReference type="GeneID" id="4984761"/>
<dbReference type="KEGG" id="ang:An11g05320"/>
<dbReference type="VEuPathDB" id="FungiDB:An11g05320"/>
<dbReference type="HOGENOM" id="CLU_065214_0_1_1"/>
<dbReference type="Proteomes" id="UP000006706">
    <property type="component" value="Chromosome 7R"/>
</dbReference>
<dbReference type="GO" id="GO:0070847">
    <property type="term" value="C:core mediator complex"/>
    <property type="evidence" value="ECO:0007669"/>
    <property type="project" value="TreeGrafter"/>
</dbReference>
<dbReference type="GO" id="GO:0016592">
    <property type="term" value="C:mediator complex"/>
    <property type="evidence" value="ECO:0007669"/>
    <property type="project" value="InterPro"/>
</dbReference>
<dbReference type="GO" id="GO:0003712">
    <property type="term" value="F:transcription coregulator activity"/>
    <property type="evidence" value="ECO:0007669"/>
    <property type="project" value="InterPro"/>
</dbReference>
<dbReference type="GO" id="GO:0006357">
    <property type="term" value="P:regulation of transcription by RNA polymerase II"/>
    <property type="evidence" value="ECO:0007669"/>
    <property type="project" value="InterPro"/>
</dbReference>
<dbReference type="Gene3D" id="6.10.140.1520">
    <property type="match status" value="1"/>
</dbReference>
<dbReference type="Gene3D" id="6.10.140.200">
    <property type="match status" value="1"/>
</dbReference>
<dbReference type="InterPro" id="IPR037212">
    <property type="entry name" value="Med7/Med21-like"/>
</dbReference>
<dbReference type="InterPro" id="IPR009244">
    <property type="entry name" value="Mediatior_Med7"/>
</dbReference>
<dbReference type="InterPro" id="IPR044888">
    <property type="entry name" value="Mediatior_Med7_sf"/>
</dbReference>
<dbReference type="PANTHER" id="PTHR21428">
    <property type="entry name" value="MEDIATOR OF RNA POLYMERASE II TRANSCRIPTION SUBUNIT 7"/>
    <property type="match status" value="1"/>
</dbReference>
<dbReference type="PANTHER" id="PTHR21428:SF11">
    <property type="entry name" value="MEDIATOR OF RNA POLYMERASE II TRANSCRIPTION SUBUNIT 7"/>
    <property type="match status" value="1"/>
</dbReference>
<dbReference type="Pfam" id="PF05983">
    <property type="entry name" value="Med7"/>
    <property type="match status" value="1"/>
</dbReference>
<dbReference type="SUPFAM" id="SSF140718">
    <property type="entry name" value="Mediator hinge subcomplex-like"/>
    <property type="match status" value="1"/>
</dbReference>
<reference key="1">
    <citation type="journal article" date="2007" name="Nat. Biotechnol.">
        <title>Genome sequencing and analysis of the versatile cell factory Aspergillus niger CBS 513.88.</title>
        <authorList>
            <person name="Pel H.J."/>
            <person name="de Winde J.H."/>
            <person name="Archer D.B."/>
            <person name="Dyer P.S."/>
            <person name="Hofmann G."/>
            <person name="Schaap P.J."/>
            <person name="Turner G."/>
            <person name="de Vries R.P."/>
            <person name="Albang R."/>
            <person name="Albermann K."/>
            <person name="Andersen M.R."/>
            <person name="Bendtsen J.D."/>
            <person name="Benen J.A.E."/>
            <person name="van den Berg M."/>
            <person name="Breestraat S."/>
            <person name="Caddick M.X."/>
            <person name="Contreras R."/>
            <person name="Cornell M."/>
            <person name="Coutinho P.M."/>
            <person name="Danchin E.G.J."/>
            <person name="Debets A.J.M."/>
            <person name="Dekker P."/>
            <person name="van Dijck P.W.M."/>
            <person name="van Dijk A."/>
            <person name="Dijkhuizen L."/>
            <person name="Driessen A.J.M."/>
            <person name="d'Enfert C."/>
            <person name="Geysens S."/>
            <person name="Goosen C."/>
            <person name="Groot G.S.P."/>
            <person name="de Groot P.W.J."/>
            <person name="Guillemette T."/>
            <person name="Henrissat B."/>
            <person name="Herweijer M."/>
            <person name="van den Hombergh J.P.T.W."/>
            <person name="van den Hondel C.A.M.J.J."/>
            <person name="van der Heijden R.T.J.M."/>
            <person name="van der Kaaij R.M."/>
            <person name="Klis F.M."/>
            <person name="Kools H.J."/>
            <person name="Kubicek C.P."/>
            <person name="van Kuyk P.A."/>
            <person name="Lauber J."/>
            <person name="Lu X."/>
            <person name="van der Maarel M.J.E.C."/>
            <person name="Meulenberg R."/>
            <person name="Menke H."/>
            <person name="Mortimer M.A."/>
            <person name="Nielsen J."/>
            <person name="Oliver S.G."/>
            <person name="Olsthoorn M."/>
            <person name="Pal K."/>
            <person name="van Peij N.N.M.E."/>
            <person name="Ram A.F.J."/>
            <person name="Rinas U."/>
            <person name="Roubos J.A."/>
            <person name="Sagt C.M.J."/>
            <person name="Schmoll M."/>
            <person name="Sun J."/>
            <person name="Ussery D."/>
            <person name="Varga J."/>
            <person name="Vervecken W."/>
            <person name="van de Vondervoort P.J.J."/>
            <person name="Wedler H."/>
            <person name="Woesten H.A.B."/>
            <person name="Zeng A.-P."/>
            <person name="van Ooyen A.J.J."/>
            <person name="Visser J."/>
            <person name="Stam H."/>
        </authorList>
    </citation>
    <scope>NUCLEOTIDE SEQUENCE [LARGE SCALE GENOMIC DNA]</scope>
    <source>
        <strain>ATCC MYA-4892 / CBS 513.88 / FGSC A1513</strain>
    </source>
</reference>
<sequence>MADAAQQRTLATAFAPPPPLWKHFTPDNLKRLEEIKKEASKGEDGKPQKKKWSPAELRALDLPPELRLLVPPAIPDTGHYSVFGELQNLSTALPSLKDQGITQLYPSSSPADTDRQSPSEPSRPLNHAYYLLKISKSLLLNFLEFVGVLSVSPEQFESKVEDLRNLFINAHHLLNLYRPHQARESLIMMMEEQLSRTKEEIQQMDKLKAEITGVLERLEADGIAAQSHPQQTDEDGRKESETSQKTIEDAQLVWDLLDGKIEG</sequence>